<comment type="function">
    <text evidence="3">This is one of the three pore-forming subunits of the heterotrimeric epithelial sodium channel (ENaC), a critical regulator of sodium balance and fluid homeostasis. ENaC operates in epithelial tissues, where it mediates the electrodiffusion of sodium ions from extracellular fluid through the apical membrane of cells, with water following osmotically.</text>
</comment>
<comment type="catalytic activity">
    <reaction evidence="3">
        <text>Na(+)(in) = Na(+)(out)</text>
        <dbReference type="Rhea" id="RHEA:34963"/>
        <dbReference type="ChEBI" id="CHEBI:29101"/>
    </reaction>
</comment>
<comment type="activity regulation">
    <text evidence="3">Originally identified and characterized by its inhibition by the diuretic drug amiloride.</text>
</comment>
<comment type="subunit">
    <text evidence="3">Component of the heterotrimeric epithelial sodium channel (ENaC) composed of an alpha/SCNN1A, a beta/SCNN1B and a gamma/SCNN1G subunit.</text>
</comment>
<comment type="subcellular location">
    <subcellularLocation>
        <location evidence="6">Apical cell membrane</location>
        <topology evidence="1">Multi-pass membrane protein</topology>
    </subcellularLocation>
</comment>
<comment type="similarity">
    <text evidence="5">Belongs to the amiloride-sensitive sodium channel (TC 1.A.6) family. SCNN1G subfamily.</text>
</comment>
<protein>
    <recommendedName>
        <fullName evidence="6">Epithelial sodium channel subunit gamma</fullName>
    </recommendedName>
    <alternativeName>
        <fullName evidence="4">Amiloride-sensitive sodium channel subunit gamma</fullName>
    </alternativeName>
</protein>
<gene>
    <name type="primary">scnn1g-a</name>
</gene>
<evidence type="ECO:0000250" key="1">
    <source>
        <dbReference type="UniProtKB" id="P51170"/>
    </source>
</evidence>
<evidence type="ECO:0000255" key="2"/>
<evidence type="ECO:0000269" key="3">
    <source>
    </source>
</evidence>
<evidence type="ECO:0000303" key="4">
    <source>
    </source>
</evidence>
<evidence type="ECO:0000305" key="5"/>
<evidence type="ECO:0000305" key="6">
    <source>
    </source>
</evidence>
<keyword id="KW-1003">Cell membrane</keyword>
<keyword id="KW-1015">Disulfide bond</keyword>
<keyword id="KW-0407">Ion channel</keyword>
<keyword id="KW-0406">Ion transport</keyword>
<keyword id="KW-0472">Membrane</keyword>
<keyword id="KW-1185">Reference proteome</keyword>
<keyword id="KW-0915">Sodium</keyword>
<keyword id="KW-0894">Sodium channel</keyword>
<keyword id="KW-0739">Sodium transport</keyword>
<keyword id="KW-0812">Transmembrane</keyword>
<keyword id="KW-1133">Transmembrane helix</keyword>
<keyword id="KW-0813">Transport</keyword>
<feature type="chain" id="PRO_0000181280" description="Epithelial sodium channel subunit gamma">
    <location>
        <begin position="1"/>
        <end position="660"/>
    </location>
</feature>
<feature type="topological domain" description="Cytoplasmic" evidence="1">
    <location>
        <begin position="1"/>
        <end position="55"/>
    </location>
</feature>
<feature type="transmembrane region" description="Helical; Name=1" evidence="2">
    <location>
        <begin position="56"/>
        <end position="76"/>
    </location>
</feature>
<feature type="topological domain" description="Extracellular" evidence="1">
    <location>
        <begin position="77"/>
        <end position="537"/>
    </location>
</feature>
<feature type="transmembrane region" description="Helical; Name=2" evidence="2">
    <location>
        <begin position="538"/>
        <end position="558"/>
    </location>
</feature>
<feature type="topological domain" description="Cytoplasmic" evidence="1">
    <location>
        <begin position="559"/>
        <end position="660"/>
    </location>
</feature>
<feature type="disulfide bond" evidence="1">
    <location>
        <begin position="101"/>
        <end position="286"/>
    </location>
</feature>
<feature type="disulfide bond" evidence="1">
    <location>
        <begin position="209"/>
        <end position="217"/>
    </location>
</feature>
<feature type="disulfide bond" evidence="1">
    <location>
        <begin position="263"/>
        <end position="270"/>
    </location>
</feature>
<feature type="disulfide bond" evidence="1">
    <location>
        <begin position="375"/>
        <end position="460"/>
    </location>
</feature>
<feature type="disulfide bond" evidence="1">
    <location>
        <begin position="397"/>
        <end position="456"/>
    </location>
</feature>
<feature type="disulfide bond" evidence="1">
    <location>
        <begin position="401"/>
        <end position="452"/>
    </location>
</feature>
<feature type="disulfide bond" evidence="1">
    <location>
        <begin position="410"/>
        <end position="437"/>
    </location>
</feature>
<feature type="disulfide bond" evidence="1">
    <location>
        <begin position="412"/>
        <end position="426"/>
    </location>
</feature>
<sequence length="660" mass="75622">MSKSGKKLTQKLKKNLPVTGPQAPTLYELMQWYCLNTNTHGCRRIVVSKGRLRRWIWISLTLCAVAVIFWQCALLLMSYYSVSASITVTFQKLVYPAVTICNLNPYSYSKVKDRLAALEKETSQTLKNIYGFTEPLIRSKRDVGVNVENSTEDIFLKQIPLYRLESVKGSQLVVSDLKTKKRTRMSAKVIHRDAESVQDPGNMVGFKLCDPKNSSDCTIFTFSSGVNAIQEWYRLHYTNILAKISMEDKIAMGYKADELIVTCFFDGLSCDARNFTLFHHPLYGNCYTFNSAERGNLLVSSMGGAEYGLKVVLYIDEDEYNPYLSTAAGAKILVHDQDEYPFIEYLGTELETATETSIGMQLTESAKLSDPYSDCTMDGRDVSVENLYNKKYTLQICLNSCFQREMVRSCGCAHYDQPLPNGAKYCNYEEYPSWIYCYFKVYKQFVQEELGCQSACRESCSFKEWTLTRSLAKWPSLNSEEWMLRVLSWELGEKLNKNLTKNDLANLNIFYQDLNSRSISESPTYNIVTLLSNFGGQLGLWMSCSMICVLEIIEVFFIDSFWVVLRQRWRNWWENRKENQAEDTPEIPVPTMTGHDNPLCVDNPICLGEEDPPTFNSALQLPQSQDSHVPRTPPPKYNTLRIQSAFQLETIDSDEDVERL</sequence>
<dbReference type="EMBL" id="U25342">
    <property type="protein sequence ID" value="AAA74972.1"/>
    <property type="molecule type" value="mRNA"/>
</dbReference>
<dbReference type="PIR" id="I51684">
    <property type="entry name" value="I51684"/>
</dbReference>
<dbReference type="SMR" id="P51171"/>
<dbReference type="GeneID" id="373658"/>
<dbReference type="KEGG" id="xla:373658"/>
<dbReference type="AGR" id="Xenbase:XB-GENE-980900"/>
<dbReference type="CTD" id="373658"/>
<dbReference type="Xenbase" id="XB-GENE-980900">
    <property type="gene designation" value="scnn1g.L"/>
</dbReference>
<dbReference type="OrthoDB" id="6021021at2759"/>
<dbReference type="Proteomes" id="UP000186698">
    <property type="component" value="Chromosome 9_10L"/>
</dbReference>
<dbReference type="Bgee" id="373658">
    <property type="expression patterns" value="Expressed in kidney and 12 other cell types or tissues"/>
</dbReference>
<dbReference type="GO" id="GO:0016324">
    <property type="term" value="C:apical plasma membrane"/>
    <property type="evidence" value="ECO:0000250"/>
    <property type="project" value="UniProtKB"/>
</dbReference>
<dbReference type="GO" id="GO:0005886">
    <property type="term" value="C:plasma membrane"/>
    <property type="evidence" value="ECO:0000250"/>
    <property type="project" value="UniProtKB"/>
</dbReference>
<dbReference type="GO" id="GO:0034706">
    <property type="term" value="C:sodium channel complex"/>
    <property type="evidence" value="ECO:0000250"/>
    <property type="project" value="UniProtKB"/>
</dbReference>
<dbReference type="GO" id="GO:0015280">
    <property type="term" value="F:ligand-gated sodium channel activity"/>
    <property type="evidence" value="ECO:0000318"/>
    <property type="project" value="GO_Central"/>
</dbReference>
<dbReference type="GO" id="GO:0050891">
    <property type="term" value="P:multicellular organismal-level water homeostasis"/>
    <property type="evidence" value="ECO:0000250"/>
    <property type="project" value="UniProtKB"/>
</dbReference>
<dbReference type="GO" id="GO:0055078">
    <property type="term" value="P:sodium ion homeostasis"/>
    <property type="evidence" value="ECO:0000250"/>
    <property type="project" value="UniProtKB"/>
</dbReference>
<dbReference type="GO" id="GO:0035725">
    <property type="term" value="P:sodium ion transmembrane transport"/>
    <property type="evidence" value="ECO:0000250"/>
    <property type="project" value="UniProtKB"/>
</dbReference>
<dbReference type="FunFam" id="1.10.287.770:FF:000005">
    <property type="entry name" value="Amiloride-sensitive sodium channel subunit gamma"/>
    <property type="match status" value="1"/>
</dbReference>
<dbReference type="FunFam" id="2.60.470.10:FF:000005">
    <property type="entry name" value="Amiloride-sensitive sodium channel subunit gamma"/>
    <property type="match status" value="1"/>
</dbReference>
<dbReference type="Gene3D" id="2.60.470.10">
    <property type="entry name" value="Acid-sensing ion channels like domains"/>
    <property type="match status" value="1"/>
</dbReference>
<dbReference type="Gene3D" id="1.10.287.770">
    <property type="entry name" value="YojJ-like"/>
    <property type="match status" value="1"/>
</dbReference>
<dbReference type="InterPro" id="IPR001873">
    <property type="entry name" value="ENaC"/>
</dbReference>
<dbReference type="InterPro" id="IPR004724">
    <property type="entry name" value="ENaC_chordates"/>
</dbReference>
<dbReference type="InterPro" id="IPR020903">
    <property type="entry name" value="ENaC_CS"/>
</dbReference>
<dbReference type="NCBIfam" id="TIGR00859">
    <property type="entry name" value="ENaC"/>
    <property type="match status" value="1"/>
</dbReference>
<dbReference type="PANTHER" id="PTHR11690:SF19">
    <property type="entry name" value="AMILORIDE-SENSITIVE SODIUM CHANNEL SUBUNIT GAMMA"/>
    <property type="match status" value="1"/>
</dbReference>
<dbReference type="PANTHER" id="PTHR11690">
    <property type="entry name" value="AMILORIDE-SENSITIVE SODIUM CHANNEL-RELATED"/>
    <property type="match status" value="1"/>
</dbReference>
<dbReference type="Pfam" id="PF00858">
    <property type="entry name" value="ASC"/>
    <property type="match status" value="1"/>
</dbReference>
<dbReference type="PRINTS" id="PR01078">
    <property type="entry name" value="AMINACHANNEL"/>
</dbReference>
<dbReference type="PROSITE" id="PS01206">
    <property type="entry name" value="ASC"/>
    <property type="match status" value="1"/>
</dbReference>
<organism>
    <name type="scientific">Xenopus laevis</name>
    <name type="common">African clawed frog</name>
    <dbReference type="NCBI Taxonomy" id="8355"/>
    <lineage>
        <taxon>Eukaryota</taxon>
        <taxon>Metazoa</taxon>
        <taxon>Chordata</taxon>
        <taxon>Craniata</taxon>
        <taxon>Vertebrata</taxon>
        <taxon>Euteleostomi</taxon>
        <taxon>Amphibia</taxon>
        <taxon>Batrachia</taxon>
        <taxon>Anura</taxon>
        <taxon>Pipoidea</taxon>
        <taxon>Pipidae</taxon>
        <taxon>Xenopodinae</taxon>
        <taxon>Xenopus</taxon>
        <taxon>Xenopus</taxon>
    </lineage>
</organism>
<reference key="1">
    <citation type="journal article" date="1995" name="Am. J. Physiol.">
        <title>The highly selective low-conductance epithelial Na channel of Xenopus laevis A6 kidney cells.</title>
        <authorList>
            <person name="Puoti A."/>
            <person name="May A."/>
            <person name="Canessa C.M."/>
            <person name="Horisberger J.-D."/>
            <person name="Schild L."/>
            <person name="Rossier B.C."/>
        </authorList>
    </citation>
    <scope>NUCLEOTIDE SEQUENCE [MRNA]</scope>
    <scope>FUNCTION</scope>
    <scope>TRANSPORTER ACTIVITY</scope>
    <scope>ACTIVITY REGULATION</scope>
    <scope>SUBUNIT</scope>
    <scope>SUBCELLULAR LOCATION</scope>
    <source>
        <tissue>Kidney</tissue>
    </source>
</reference>
<name>SCNNG_XENLA</name>
<proteinExistence type="evidence at protein level"/>
<accession>P51171</accession>